<name>DNLJ_MESH2</name>
<evidence type="ECO:0000255" key="1">
    <source>
        <dbReference type="HAMAP-Rule" id="MF_01588"/>
    </source>
</evidence>
<accession>Q601T8</accession>
<sequence>MKKNSQIRAKIIELREKIEKWNHHYYQLQNPLVDDLVYDKTLRELEKLERENFFLFSLEELNQSPSQKVGSKITSKFEKVAHSSPMLSLNKAYSNEELEKWAKKAREILKTVTFFVEPKIDGIALSLFYQNGNLIKALTRGDGVFGENVLVNALKINDEFIPKKINYLEDLEVRGEIYIDNSTFASLQLETKKFKNPRNAASGILRRYKNHKPKIDAKSIKFLEEESDFRYLKSFFYTLVNPEKHKINSQFDSTNFLRNLGFQVNPFQKKCSDLKDVFNFISIIKQKRDFLNYNIDGVVVKVNEFSIYEKLGSTSKFPHSAIAFKFEDDIAKTKLLAIFATIGRTGKVTYNAKIEPVTLAGSKISSAILPNYSYIENLKLNLNTEVYIKKAGEIIPQIIGSVHNYPKTNFSIVKNCPKCNSELVNSESGLDQFCQNQFCPEIILQKIVHFCSKNALNIESLAQKRIEKFLEKGLISSACDIFYLKDKLELIYERLSNKNQLLTKQNASQSMQIKSIMKLLNEVERAKNIDFYRLIFGLGIRNVGLKAAKILSRYASNLSELRNLDFNLLKNQHDFGPVIIESLIDYFNNQKNSEQLNCLETVGFNFKTTFLTNQSNSWASFAISGKLSKPRDEYVRIIEESGASFHESLTKKTDFLLLGQSAGSKIEKAKKAGIKIINEVQFFDLIKNSKKT</sequence>
<reference key="1">
    <citation type="journal article" date="2004" name="J. Bacteriol.">
        <title>The genome sequence of Mycoplasma hyopneumoniae strain 232, the agent of swine mycoplasmosis.</title>
        <authorList>
            <person name="Minion F.C."/>
            <person name="Lefkowitz E.J."/>
            <person name="Madsen M.L."/>
            <person name="Cleary B.J."/>
            <person name="Swartzell S.M."/>
            <person name="Mahairas G.G."/>
        </authorList>
    </citation>
    <scope>NUCLEOTIDE SEQUENCE [LARGE SCALE GENOMIC DNA]</scope>
    <source>
        <strain>232</strain>
    </source>
</reference>
<keyword id="KW-0227">DNA damage</keyword>
<keyword id="KW-0234">DNA repair</keyword>
<keyword id="KW-0235">DNA replication</keyword>
<keyword id="KW-0436">Ligase</keyword>
<keyword id="KW-0460">Magnesium</keyword>
<keyword id="KW-0464">Manganese</keyword>
<keyword id="KW-0479">Metal-binding</keyword>
<keyword id="KW-0520">NAD</keyword>
<keyword id="KW-0862">Zinc</keyword>
<protein>
    <recommendedName>
        <fullName evidence="1">DNA ligase</fullName>
        <ecNumber evidence="1">6.5.1.2</ecNumber>
    </recommendedName>
    <alternativeName>
        <fullName evidence="1">Polydeoxyribonucleotide synthase [NAD(+)]</fullName>
    </alternativeName>
</protein>
<feature type="chain" id="PRO_0000313321" description="DNA ligase">
    <location>
        <begin position="1"/>
        <end position="692"/>
    </location>
</feature>
<feature type="domain" description="BRCT" evidence="1">
    <location>
        <begin position="611"/>
        <end position="692"/>
    </location>
</feature>
<feature type="active site" description="N6-AMP-lysine intermediate" evidence="1">
    <location>
        <position position="119"/>
    </location>
</feature>
<feature type="binding site" evidence="1">
    <location>
        <begin position="35"/>
        <end position="39"/>
    </location>
    <ligand>
        <name>NAD(+)</name>
        <dbReference type="ChEBI" id="CHEBI:57540"/>
    </ligand>
</feature>
<feature type="binding site" evidence="1">
    <location>
        <begin position="88"/>
        <end position="89"/>
    </location>
    <ligand>
        <name>NAD(+)</name>
        <dbReference type="ChEBI" id="CHEBI:57540"/>
    </ligand>
</feature>
<feature type="binding site" evidence="1">
    <location>
        <position position="117"/>
    </location>
    <ligand>
        <name>NAD(+)</name>
        <dbReference type="ChEBI" id="CHEBI:57540"/>
    </ligand>
</feature>
<feature type="binding site" evidence="1">
    <location>
        <position position="140"/>
    </location>
    <ligand>
        <name>NAD(+)</name>
        <dbReference type="ChEBI" id="CHEBI:57540"/>
    </ligand>
</feature>
<feature type="binding site" evidence="1">
    <location>
        <position position="176"/>
    </location>
    <ligand>
        <name>NAD(+)</name>
        <dbReference type="ChEBI" id="CHEBI:57540"/>
    </ligand>
</feature>
<feature type="binding site" evidence="1">
    <location>
        <position position="301"/>
    </location>
    <ligand>
        <name>NAD(+)</name>
        <dbReference type="ChEBI" id="CHEBI:57540"/>
    </ligand>
</feature>
<feature type="binding site" evidence="1">
    <location>
        <position position="325"/>
    </location>
    <ligand>
        <name>NAD(+)</name>
        <dbReference type="ChEBI" id="CHEBI:57540"/>
    </ligand>
</feature>
<feature type="binding site" evidence="1">
    <location>
        <position position="416"/>
    </location>
    <ligand>
        <name>Zn(2+)</name>
        <dbReference type="ChEBI" id="CHEBI:29105"/>
    </ligand>
</feature>
<feature type="binding site" evidence="1">
    <location>
        <position position="419"/>
    </location>
    <ligand>
        <name>Zn(2+)</name>
        <dbReference type="ChEBI" id="CHEBI:29105"/>
    </ligand>
</feature>
<feature type="binding site" evidence="1">
    <location>
        <position position="434"/>
    </location>
    <ligand>
        <name>Zn(2+)</name>
        <dbReference type="ChEBI" id="CHEBI:29105"/>
    </ligand>
</feature>
<feature type="binding site" evidence="1">
    <location>
        <position position="439"/>
    </location>
    <ligand>
        <name>Zn(2+)</name>
        <dbReference type="ChEBI" id="CHEBI:29105"/>
    </ligand>
</feature>
<organism>
    <name type="scientific">Mesomycoplasma hyopneumoniae (strain 232)</name>
    <name type="common">Mycoplasma hyopneumoniae</name>
    <dbReference type="NCBI Taxonomy" id="295358"/>
    <lineage>
        <taxon>Bacteria</taxon>
        <taxon>Bacillati</taxon>
        <taxon>Mycoplasmatota</taxon>
        <taxon>Mycoplasmoidales</taxon>
        <taxon>Metamycoplasmataceae</taxon>
        <taxon>Mesomycoplasma</taxon>
    </lineage>
</organism>
<gene>
    <name evidence="1" type="primary">ligA</name>
    <name type="ordered locus">mhp113</name>
</gene>
<proteinExistence type="inferred from homology"/>
<dbReference type="EC" id="6.5.1.2" evidence="1"/>
<dbReference type="EMBL" id="AE017332">
    <property type="protein sequence ID" value="AAV27717.1"/>
    <property type="molecule type" value="Genomic_DNA"/>
</dbReference>
<dbReference type="RefSeq" id="WP_011205951.1">
    <property type="nucleotide sequence ID" value="NC_006360.1"/>
</dbReference>
<dbReference type="SMR" id="Q601T8"/>
<dbReference type="KEGG" id="mhy:mhp113"/>
<dbReference type="eggNOG" id="COG0272">
    <property type="taxonomic scope" value="Bacteria"/>
</dbReference>
<dbReference type="HOGENOM" id="CLU_007764_2_0_14"/>
<dbReference type="PhylomeDB" id="Q601T8"/>
<dbReference type="Proteomes" id="UP000006822">
    <property type="component" value="Chromosome"/>
</dbReference>
<dbReference type="GO" id="GO:0003911">
    <property type="term" value="F:DNA ligase (NAD+) activity"/>
    <property type="evidence" value="ECO:0007669"/>
    <property type="project" value="UniProtKB-UniRule"/>
</dbReference>
<dbReference type="GO" id="GO:0046872">
    <property type="term" value="F:metal ion binding"/>
    <property type="evidence" value="ECO:0007669"/>
    <property type="project" value="UniProtKB-KW"/>
</dbReference>
<dbReference type="GO" id="GO:0006281">
    <property type="term" value="P:DNA repair"/>
    <property type="evidence" value="ECO:0007669"/>
    <property type="project" value="UniProtKB-KW"/>
</dbReference>
<dbReference type="GO" id="GO:0006260">
    <property type="term" value="P:DNA replication"/>
    <property type="evidence" value="ECO:0007669"/>
    <property type="project" value="UniProtKB-KW"/>
</dbReference>
<dbReference type="CDD" id="cd17748">
    <property type="entry name" value="BRCT_DNA_ligase_like"/>
    <property type="match status" value="1"/>
</dbReference>
<dbReference type="CDD" id="cd00114">
    <property type="entry name" value="LIGANc"/>
    <property type="match status" value="1"/>
</dbReference>
<dbReference type="Gene3D" id="1.10.150.20">
    <property type="entry name" value="5' to 3' exonuclease, C-terminal subdomain"/>
    <property type="match status" value="2"/>
</dbReference>
<dbReference type="Gene3D" id="3.40.50.10190">
    <property type="entry name" value="BRCT domain"/>
    <property type="match status" value="1"/>
</dbReference>
<dbReference type="Gene3D" id="3.30.470.30">
    <property type="entry name" value="DNA ligase/mRNA capping enzyme"/>
    <property type="match status" value="1"/>
</dbReference>
<dbReference type="Gene3D" id="1.10.287.610">
    <property type="entry name" value="Helix hairpin bin"/>
    <property type="match status" value="1"/>
</dbReference>
<dbReference type="Gene3D" id="2.40.50.140">
    <property type="entry name" value="Nucleic acid-binding proteins"/>
    <property type="match status" value="1"/>
</dbReference>
<dbReference type="HAMAP" id="MF_01588">
    <property type="entry name" value="DNA_ligase_A"/>
    <property type="match status" value="1"/>
</dbReference>
<dbReference type="InterPro" id="IPR001357">
    <property type="entry name" value="BRCT_dom"/>
</dbReference>
<dbReference type="InterPro" id="IPR036420">
    <property type="entry name" value="BRCT_dom_sf"/>
</dbReference>
<dbReference type="InterPro" id="IPR041663">
    <property type="entry name" value="DisA/LigA_HHH"/>
</dbReference>
<dbReference type="InterPro" id="IPR001679">
    <property type="entry name" value="DNA_ligase"/>
</dbReference>
<dbReference type="InterPro" id="IPR018239">
    <property type="entry name" value="DNA_ligase_AS"/>
</dbReference>
<dbReference type="InterPro" id="IPR013839">
    <property type="entry name" value="DNAligase_adenylation"/>
</dbReference>
<dbReference type="InterPro" id="IPR013840">
    <property type="entry name" value="DNAligase_N"/>
</dbReference>
<dbReference type="InterPro" id="IPR012340">
    <property type="entry name" value="NA-bd_OB-fold"/>
</dbReference>
<dbReference type="InterPro" id="IPR004150">
    <property type="entry name" value="NAD_DNA_ligase_OB"/>
</dbReference>
<dbReference type="InterPro" id="IPR010994">
    <property type="entry name" value="RuvA_2-like"/>
</dbReference>
<dbReference type="InterPro" id="IPR004149">
    <property type="entry name" value="Znf_DNAligase_C4"/>
</dbReference>
<dbReference type="NCBIfam" id="TIGR00575">
    <property type="entry name" value="dnlj"/>
    <property type="match status" value="1"/>
</dbReference>
<dbReference type="NCBIfam" id="NF005932">
    <property type="entry name" value="PRK07956.1"/>
    <property type="match status" value="1"/>
</dbReference>
<dbReference type="Pfam" id="PF00533">
    <property type="entry name" value="BRCT"/>
    <property type="match status" value="1"/>
</dbReference>
<dbReference type="Pfam" id="PF01653">
    <property type="entry name" value="DNA_ligase_aden"/>
    <property type="match status" value="1"/>
</dbReference>
<dbReference type="Pfam" id="PF03120">
    <property type="entry name" value="DNA_ligase_OB"/>
    <property type="match status" value="1"/>
</dbReference>
<dbReference type="Pfam" id="PF03119">
    <property type="entry name" value="DNA_ligase_ZBD"/>
    <property type="match status" value="1"/>
</dbReference>
<dbReference type="Pfam" id="PF12826">
    <property type="entry name" value="HHH_2"/>
    <property type="match status" value="1"/>
</dbReference>
<dbReference type="PIRSF" id="PIRSF001604">
    <property type="entry name" value="LigA"/>
    <property type="match status" value="1"/>
</dbReference>
<dbReference type="SMART" id="SM00292">
    <property type="entry name" value="BRCT"/>
    <property type="match status" value="1"/>
</dbReference>
<dbReference type="SMART" id="SM00532">
    <property type="entry name" value="LIGANc"/>
    <property type="match status" value="1"/>
</dbReference>
<dbReference type="SUPFAM" id="SSF52113">
    <property type="entry name" value="BRCT domain"/>
    <property type="match status" value="1"/>
</dbReference>
<dbReference type="SUPFAM" id="SSF56091">
    <property type="entry name" value="DNA ligase/mRNA capping enzyme, catalytic domain"/>
    <property type="match status" value="1"/>
</dbReference>
<dbReference type="SUPFAM" id="SSF50249">
    <property type="entry name" value="Nucleic acid-binding proteins"/>
    <property type="match status" value="1"/>
</dbReference>
<dbReference type="SUPFAM" id="SSF47781">
    <property type="entry name" value="RuvA domain 2-like"/>
    <property type="match status" value="1"/>
</dbReference>
<dbReference type="PROSITE" id="PS50172">
    <property type="entry name" value="BRCT"/>
    <property type="match status" value="1"/>
</dbReference>
<dbReference type="PROSITE" id="PS01055">
    <property type="entry name" value="DNA_LIGASE_N1"/>
    <property type="match status" value="1"/>
</dbReference>
<comment type="function">
    <text evidence="1">DNA ligase that catalyzes the formation of phosphodiester linkages between 5'-phosphoryl and 3'-hydroxyl groups in double-stranded DNA using NAD as a coenzyme and as the energy source for the reaction. It is essential for DNA replication and repair of damaged DNA.</text>
</comment>
<comment type="catalytic activity">
    <reaction evidence="1">
        <text>NAD(+) + (deoxyribonucleotide)n-3'-hydroxyl + 5'-phospho-(deoxyribonucleotide)m = (deoxyribonucleotide)n+m + AMP + beta-nicotinamide D-nucleotide.</text>
        <dbReference type="EC" id="6.5.1.2"/>
    </reaction>
</comment>
<comment type="cofactor">
    <cofactor evidence="1">
        <name>Mg(2+)</name>
        <dbReference type="ChEBI" id="CHEBI:18420"/>
    </cofactor>
    <cofactor evidence="1">
        <name>Mn(2+)</name>
        <dbReference type="ChEBI" id="CHEBI:29035"/>
    </cofactor>
</comment>
<comment type="similarity">
    <text evidence="1">Belongs to the NAD-dependent DNA ligase family. LigA subfamily.</text>
</comment>